<feature type="chain" id="PRO_1000126791" description="Large ribosomal subunit protein bL31B">
    <location>
        <begin position="1"/>
        <end position="87"/>
    </location>
</feature>
<accession>A9AG80</accession>
<sequence length="87" mass="9891">MKPGIHPDYREVVFQDMSNGFKFITRSTIQTRETIELEGKTYPLAKIEVSSESHSFYTGQQKIMDTAGRVEKFKNKFGSRASGKVAK</sequence>
<gene>
    <name evidence="1" type="primary">rpmE2</name>
    <name type="ordered locus">Bmul_1440</name>
    <name type="ordered locus">BMULJ_01803</name>
</gene>
<reference key="1">
    <citation type="submission" date="2007-10" db="EMBL/GenBank/DDBJ databases">
        <title>Complete sequence of chromosome 1 of Burkholderia multivorans ATCC 17616.</title>
        <authorList>
            <person name="Copeland A."/>
            <person name="Lucas S."/>
            <person name="Lapidus A."/>
            <person name="Barry K."/>
            <person name="Glavina del Rio T."/>
            <person name="Dalin E."/>
            <person name="Tice H."/>
            <person name="Pitluck S."/>
            <person name="Chain P."/>
            <person name="Malfatti S."/>
            <person name="Shin M."/>
            <person name="Vergez L."/>
            <person name="Schmutz J."/>
            <person name="Larimer F."/>
            <person name="Land M."/>
            <person name="Hauser L."/>
            <person name="Kyrpides N."/>
            <person name="Kim E."/>
            <person name="Tiedje J."/>
            <person name="Richardson P."/>
        </authorList>
    </citation>
    <scope>NUCLEOTIDE SEQUENCE [LARGE SCALE GENOMIC DNA]</scope>
    <source>
        <strain>ATCC 17616 / 249</strain>
    </source>
</reference>
<reference key="2">
    <citation type="submission" date="2007-04" db="EMBL/GenBank/DDBJ databases">
        <title>Complete genome sequence of Burkholderia multivorans ATCC 17616.</title>
        <authorList>
            <person name="Ohtsubo Y."/>
            <person name="Yamashita A."/>
            <person name="Kurokawa K."/>
            <person name="Takami H."/>
            <person name="Yuhara S."/>
            <person name="Nishiyama E."/>
            <person name="Endo R."/>
            <person name="Miyazaki R."/>
            <person name="Ono A."/>
            <person name="Yano K."/>
            <person name="Ito M."/>
            <person name="Sota M."/>
            <person name="Yuji N."/>
            <person name="Hattori M."/>
            <person name="Tsuda M."/>
        </authorList>
    </citation>
    <scope>NUCLEOTIDE SEQUENCE [LARGE SCALE GENOMIC DNA]</scope>
    <source>
        <strain>ATCC 17616 / 249</strain>
    </source>
</reference>
<protein>
    <recommendedName>
        <fullName evidence="1">Large ribosomal subunit protein bL31B</fullName>
    </recommendedName>
    <alternativeName>
        <fullName evidence="2">50S ribosomal protein L31 type B</fullName>
    </alternativeName>
</protein>
<keyword id="KW-1185">Reference proteome</keyword>
<keyword id="KW-0687">Ribonucleoprotein</keyword>
<keyword id="KW-0689">Ribosomal protein</keyword>
<name>RL31B_BURM1</name>
<dbReference type="EMBL" id="CP000868">
    <property type="protein sequence ID" value="ABX15128.1"/>
    <property type="molecule type" value="Genomic_DNA"/>
</dbReference>
<dbReference type="EMBL" id="AP009385">
    <property type="protein sequence ID" value="BAG43723.1"/>
    <property type="molecule type" value="Genomic_DNA"/>
</dbReference>
<dbReference type="RefSeq" id="WP_006402343.1">
    <property type="nucleotide sequence ID" value="NC_010804.1"/>
</dbReference>
<dbReference type="SMR" id="A9AG80"/>
<dbReference type="STRING" id="395019.BMULJ_01803"/>
<dbReference type="KEGG" id="bmj:BMULJ_01803"/>
<dbReference type="KEGG" id="bmu:Bmul_1440"/>
<dbReference type="eggNOG" id="COG0254">
    <property type="taxonomic scope" value="Bacteria"/>
</dbReference>
<dbReference type="HOGENOM" id="CLU_114306_2_1_4"/>
<dbReference type="Proteomes" id="UP000008815">
    <property type="component" value="Chromosome 1"/>
</dbReference>
<dbReference type="GO" id="GO:1990904">
    <property type="term" value="C:ribonucleoprotein complex"/>
    <property type="evidence" value="ECO:0007669"/>
    <property type="project" value="UniProtKB-KW"/>
</dbReference>
<dbReference type="GO" id="GO:0005840">
    <property type="term" value="C:ribosome"/>
    <property type="evidence" value="ECO:0007669"/>
    <property type="project" value="UniProtKB-KW"/>
</dbReference>
<dbReference type="GO" id="GO:0003735">
    <property type="term" value="F:structural constituent of ribosome"/>
    <property type="evidence" value="ECO:0007669"/>
    <property type="project" value="InterPro"/>
</dbReference>
<dbReference type="GO" id="GO:0006412">
    <property type="term" value="P:translation"/>
    <property type="evidence" value="ECO:0007669"/>
    <property type="project" value="UniProtKB-UniRule"/>
</dbReference>
<dbReference type="Gene3D" id="4.10.830.30">
    <property type="entry name" value="Ribosomal protein L31"/>
    <property type="match status" value="1"/>
</dbReference>
<dbReference type="HAMAP" id="MF_00502">
    <property type="entry name" value="Ribosomal_bL31_2"/>
    <property type="match status" value="1"/>
</dbReference>
<dbReference type="InterPro" id="IPR034704">
    <property type="entry name" value="Ribosomal_bL28/bL31-like_sf"/>
</dbReference>
<dbReference type="InterPro" id="IPR002150">
    <property type="entry name" value="Ribosomal_bL31"/>
</dbReference>
<dbReference type="InterPro" id="IPR027493">
    <property type="entry name" value="Ribosomal_bL31_B"/>
</dbReference>
<dbReference type="InterPro" id="IPR042105">
    <property type="entry name" value="Ribosomal_bL31_sf"/>
</dbReference>
<dbReference type="NCBIfam" id="TIGR00105">
    <property type="entry name" value="L31"/>
    <property type="match status" value="1"/>
</dbReference>
<dbReference type="NCBIfam" id="NF002462">
    <property type="entry name" value="PRK01678.1"/>
    <property type="match status" value="1"/>
</dbReference>
<dbReference type="PANTHER" id="PTHR33280">
    <property type="entry name" value="50S RIBOSOMAL PROTEIN L31, CHLOROPLASTIC"/>
    <property type="match status" value="1"/>
</dbReference>
<dbReference type="PANTHER" id="PTHR33280:SF1">
    <property type="entry name" value="LARGE RIBOSOMAL SUBUNIT PROTEIN BL31C"/>
    <property type="match status" value="1"/>
</dbReference>
<dbReference type="Pfam" id="PF01197">
    <property type="entry name" value="Ribosomal_L31"/>
    <property type="match status" value="1"/>
</dbReference>
<dbReference type="PRINTS" id="PR01249">
    <property type="entry name" value="RIBOSOMALL31"/>
</dbReference>
<dbReference type="SUPFAM" id="SSF143800">
    <property type="entry name" value="L28p-like"/>
    <property type="match status" value="1"/>
</dbReference>
<evidence type="ECO:0000255" key="1">
    <source>
        <dbReference type="HAMAP-Rule" id="MF_00502"/>
    </source>
</evidence>
<evidence type="ECO:0000305" key="2"/>
<proteinExistence type="inferred from homology"/>
<comment type="subunit">
    <text evidence="1">Part of the 50S ribosomal subunit.</text>
</comment>
<comment type="similarity">
    <text evidence="1">Belongs to the bacterial ribosomal protein bL31 family. Type B subfamily.</text>
</comment>
<organism>
    <name type="scientific">Burkholderia multivorans (strain ATCC 17616 / 249)</name>
    <dbReference type="NCBI Taxonomy" id="395019"/>
    <lineage>
        <taxon>Bacteria</taxon>
        <taxon>Pseudomonadati</taxon>
        <taxon>Pseudomonadota</taxon>
        <taxon>Betaproteobacteria</taxon>
        <taxon>Burkholderiales</taxon>
        <taxon>Burkholderiaceae</taxon>
        <taxon>Burkholderia</taxon>
        <taxon>Burkholderia cepacia complex</taxon>
    </lineage>
</organism>